<reference key="1">
    <citation type="submission" date="2008-02" db="EMBL/GenBank/DDBJ databases">
        <title>Complete sequence of Escherichia coli C str. ATCC 8739.</title>
        <authorList>
            <person name="Copeland A."/>
            <person name="Lucas S."/>
            <person name="Lapidus A."/>
            <person name="Glavina del Rio T."/>
            <person name="Dalin E."/>
            <person name="Tice H."/>
            <person name="Bruce D."/>
            <person name="Goodwin L."/>
            <person name="Pitluck S."/>
            <person name="Kiss H."/>
            <person name="Brettin T."/>
            <person name="Detter J.C."/>
            <person name="Han C."/>
            <person name="Kuske C.R."/>
            <person name="Schmutz J."/>
            <person name="Larimer F."/>
            <person name="Land M."/>
            <person name="Hauser L."/>
            <person name="Kyrpides N."/>
            <person name="Mikhailova N."/>
            <person name="Ingram L."/>
            <person name="Richardson P."/>
        </authorList>
    </citation>
    <scope>NUCLEOTIDE SEQUENCE [LARGE SCALE GENOMIC DNA]</scope>
    <source>
        <strain>ATCC 8739 / DSM 1576 / NBRC 3972 / NCIMB 8545 / WDCM 00012 / Crooks</strain>
    </source>
</reference>
<feature type="chain" id="PRO_1000078794" description="Potassium-transporting ATPase KdpC subunit">
    <location>
        <begin position="1"/>
        <end position="190"/>
    </location>
</feature>
<feature type="transmembrane region" description="Helical" evidence="1">
    <location>
        <begin position="10"/>
        <end position="30"/>
    </location>
</feature>
<comment type="function">
    <text evidence="1">Part of the high-affinity ATP-driven potassium transport (or Kdp) system, which catalyzes the hydrolysis of ATP coupled with the electrogenic transport of potassium into the cytoplasm. This subunit acts as a catalytic chaperone that increases the ATP-binding affinity of the ATP-hydrolyzing subunit KdpB by the formation of a transient KdpB/KdpC/ATP ternary complex.</text>
</comment>
<comment type="subunit">
    <text evidence="1">The system is composed of three essential subunits: KdpA, KdpB and KdpC.</text>
</comment>
<comment type="subcellular location">
    <subcellularLocation>
        <location evidence="1">Cell inner membrane</location>
        <topology evidence="1">Single-pass membrane protein</topology>
    </subcellularLocation>
</comment>
<comment type="similarity">
    <text evidence="1">Belongs to the KdpC family.</text>
</comment>
<protein>
    <recommendedName>
        <fullName evidence="1">Potassium-transporting ATPase KdpC subunit</fullName>
    </recommendedName>
    <alternativeName>
        <fullName evidence="1">ATP phosphohydrolase [potassium-transporting] C chain</fullName>
    </alternativeName>
    <alternativeName>
        <fullName evidence="1">Potassium-binding and translocating subunit C</fullName>
    </alternativeName>
    <alternativeName>
        <fullName evidence="1">Potassium-translocating ATPase C chain</fullName>
    </alternativeName>
</protein>
<proteinExistence type="inferred from homology"/>
<name>KDPC_ECOLC</name>
<evidence type="ECO:0000255" key="1">
    <source>
        <dbReference type="HAMAP-Rule" id="MF_00276"/>
    </source>
</evidence>
<organism>
    <name type="scientific">Escherichia coli (strain ATCC 8739 / DSM 1576 / NBRC 3972 / NCIMB 8545 / WDCM 00012 / Crooks)</name>
    <dbReference type="NCBI Taxonomy" id="481805"/>
    <lineage>
        <taxon>Bacteria</taxon>
        <taxon>Pseudomonadati</taxon>
        <taxon>Pseudomonadota</taxon>
        <taxon>Gammaproteobacteria</taxon>
        <taxon>Enterobacterales</taxon>
        <taxon>Enterobacteriaceae</taxon>
        <taxon>Escherichia</taxon>
    </lineage>
</organism>
<dbReference type="EMBL" id="CP000946">
    <property type="protein sequence ID" value="ACA78586.1"/>
    <property type="molecule type" value="Genomic_DNA"/>
</dbReference>
<dbReference type="RefSeq" id="WP_001300431.1">
    <property type="nucleotide sequence ID" value="NZ_MTFT01000005.1"/>
</dbReference>
<dbReference type="SMR" id="B1IY33"/>
<dbReference type="KEGG" id="ecl:EcolC_2960"/>
<dbReference type="HOGENOM" id="CLU_077094_2_0_6"/>
<dbReference type="GO" id="GO:0005886">
    <property type="term" value="C:plasma membrane"/>
    <property type="evidence" value="ECO:0007669"/>
    <property type="project" value="UniProtKB-SubCell"/>
</dbReference>
<dbReference type="GO" id="GO:0005524">
    <property type="term" value="F:ATP binding"/>
    <property type="evidence" value="ECO:0007669"/>
    <property type="project" value="UniProtKB-UniRule"/>
</dbReference>
<dbReference type="GO" id="GO:0008556">
    <property type="term" value="F:P-type potassium transmembrane transporter activity"/>
    <property type="evidence" value="ECO:0007669"/>
    <property type="project" value="InterPro"/>
</dbReference>
<dbReference type="HAMAP" id="MF_00276">
    <property type="entry name" value="KdpC"/>
    <property type="match status" value="1"/>
</dbReference>
<dbReference type="InterPro" id="IPR003820">
    <property type="entry name" value="KdpC"/>
</dbReference>
<dbReference type="NCBIfam" id="TIGR00681">
    <property type="entry name" value="kdpC"/>
    <property type="match status" value="1"/>
</dbReference>
<dbReference type="NCBIfam" id="NF001454">
    <property type="entry name" value="PRK00315.1"/>
    <property type="match status" value="1"/>
</dbReference>
<dbReference type="PANTHER" id="PTHR30042">
    <property type="entry name" value="POTASSIUM-TRANSPORTING ATPASE C CHAIN"/>
    <property type="match status" value="1"/>
</dbReference>
<dbReference type="PANTHER" id="PTHR30042:SF2">
    <property type="entry name" value="POTASSIUM-TRANSPORTING ATPASE KDPC SUBUNIT"/>
    <property type="match status" value="1"/>
</dbReference>
<dbReference type="Pfam" id="PF02669">
    <property type="entry name" value="KdpC"/>
    <property type="match status" value="1"/>
</dbReference>
<dbReference type="PIRSF" id="PIRSF001296">
    <property type="entry name" value="K_ATPase_KdpC"/>
    <property type="match status" value="1"/>
</dbReference>
<sequence length="190" mass="20267">MSGLRPALSTFIFLLLITGGVYPLLTTVLGQWWFPWQANGSLIREGDTVRGSALIGQNFTGNGYFHGRPSATAEMPYNPQASGGSNLAVSNPELDKLIAARVAALRAANPDASASVPVELVTASASGLDNNITPQAAAWQIPRVAKARNLSVEQLTQLIAKYSQQPLVKYIGQPVVNIVELNLALDKLDE</sequence>
<keyword id="KW-0067">ATP-binding</keyword>
<keyword id="KW-0997">Cell inner membrane</keyword>
<keyword id="KW-1003">Cell membrane</keyword>
<keyword id="KW-0406">Ion transport</keyword>
<keyword id="KW-0472">Membrane</keyword>
<keyword id="KW-0547">Nucleotide-binding</keyword>
<keyword id="KW-0630">Potassium</keyword>
<keyword id="KW-0633">Potassium transport</keyword>
<keyword id="KW-0812">Transmembrane</keyword>
<keyword id="KW-1133">Transmembrane helix</keyword>
<keyword id="KW-0813">Transport</keyword>
<gene>
    <name evidence="1" type="primary">kdpC</name>
    <name type="ordered locus">EcolC_2960</name>
</gene>
<accession>B1IY33</accession>